<protein>
    <recommendedName>
        <fullName>Cryptic loci regulator 2</fullName>
    </recommendedName>
</protein>
<comment type="function">
    <text evidence="2 3">Required for deacetylation in the mating-type region and the centromere. Acts upstream of the histone deacetylases to promote transcriptional silencing. Required for proper positioning of nucleosomes at heterochromatic loci and for transcriptional gene silencing (TGS) function of the Snf2/Hdac-containing repressor complex (SHREC).</text>
</comment>
<comment type="subunit">
    <text evidence="3">Interacts with clr3.</text>
</comment>
<comment type="subcellular location">
    <subcellularLocation>
        <location evidence="3">Nucleus</location>
    </subcellularLocation>
    <subcellularLocation>
        <location evidence="3">Chromosome</location>
        <location evidence="3">Centromere</location>
    </subcellularLocation>
    <subcellularLocation>
        <location evidence="3">Chromosome</location>
        <location evidence="3">Telomere</location>
    </subcellularLocation>
    <text>Associates with major heterochromatin, centromeres, sub-telomeres, rDNA and the mat locus.</text>
</comment>
<sequence>MPAITCVWSDGRSDTWPNVNGHSRTRSVPSLKPLPHQDSKNLLYRQICGRLLAQHVFGGAGSTQPILNQLCKRLSTGNPNNTNASTVVTAPEKNVVSARHVRPNPKSSKDTLEKQPKYSSQIYLTDSFENYYLASLPTNYQLYQRDSNRENGNGKREFWLYGHPSGRPFRSVNDFLHHLYWLISDLTRNESTCCCVLCSGNMTRVRKNLQKENERMFHECKDDTYTWPSSYRLGEVVWIDINNELIPAIIVARNLINYESNQMDAVKLISDTFVEPYQYHCKQLGNSRYYFDMAAADIEPWSRHPLDLQKQEHLVAHSICQTWNLFGIFQPLEGIDMEEPKFHDENYSIPLTVLPTFGGESNSLDDHFYGIFRGAEKLWINDLCVISTSSLPSVLQKTSFMYISDIYVNEDDIVCFQGSLWTQIDKNALDYNDSADNIDEHKDDLKELPRRLQMVSKLSNTYFRCLHDKSVEYVCPFADVLGRWYEPWFVKGDLNYTSEVKERTSSRLSAVGSENWVDDDFYEYLLSEIDMVSAVVM</sequence>
<gene>
    <name type="primary">clr2</name>
    <name type="ORF">SPAC1B3.17</name>
</gene>
<reference key="1">
    <citation type="journal article" date="2004" name="Nucleic Acids Res.">
        <title>A novel type of silencing factor, Clr2, is necessary for transcriptional silencing at various chromosomal locations in the fission yeast Schizosaccharomyces pombe.</title>
        <authorList>
            <person name="Bjerling P."/>
            <person name="Ekwall K."/>
            <person name="Egel R."/>
            <person name="Thon G."/>
        </authorList>
    </citation>
    <scope>NUCLEOTIDE SEQUENCE [GENOMIC DNA]</scope>
    <scope>FUNCTION</scope>
</reference>
<reference key="2">
    <citation type="journal article" date="2002" name="Nature">
        <title>The genome sequence of Schizosaccharomyces pombe.</title>
        <authorList>
            <person name="Wood V."/>
            <person name="Gwilliam R."/>
            <person name="Rajandream M.A."/>
            <person name="Lyne M.H."/>
            <person name="Lyne R."/>
            <person name="Stewart A."/>
            <person name="Sgouros J.G."/>
            <person name="Peat N."/>
            <person name="Hayles J."/>
            <person name="Baker S.G."/>
            <person name="Basham D."/>
            <person name="Bowman S."/>
            <person name="Brooks K."/>
            <person name="Brown D."/>
            <person name="Brown S."/>
            <person name="Chillingworth T."/>
            <person name="Churcher C.M."/>
            <person name="Collins M."/>
            <person name="Connor R."/>
            <person name="Cronin A."/>
            <person name="Davis P."/>
            <person name="Feltwell T."/>
            <person name="Fraser A."/>
            <person name="Gentles S."/>
            <person name="Goble A."/>
            <person name="Hamlin N."/>
            <person name="Harris D.E."/>
            <person name="Hidalgo J."/>
            <person name="Hodgson G."/>
            <person name="Holroyd S."/>
            <person name="Hornsby T."/>
            <person name="Howarth S."/>
            <person name="Huckle E.J."/>
            <person name="Hunt S."/>
            <person name="Jagels K."/>
            <person name="James K.D."/>
            <person name="Jones L."/>
            <person name="Jones M."/>
            <person name="Leather S."/>
            <person name="McDonald S."/>
            <person name="McLean J."/>
            <person name="Mooney P."/>
            <person name="Moule S."/>
            <person name="Mungall K.L."/>
            <person name="Murphy L.D."/>
            <person name="Niblett D."/>
            <person name="Odell C."/>
            <person name="Oliver K."/>
            <person name="O'Neil S."/>
            <person name="Pearson D."/>
            <person name="Quail M.A."/>
            <person name="Rabbinowitsch E."/>
            <person name="Rutherford K.M."/>
            <person name="Rutter S."/>
            <person name="Saunders D."/>
            <person name="Seeger K."/>
            <person name="Sharp S."/>
            <person name="Skelton J."/>
            <person name="Simmonds M.N."/>
            <person name="Squares R."/>
            <person name="Squares S."/>
            <person name="Stevens K."/>
            <person name="Taylor K."/>
            <person name="Taylor R.G."/>
            <person name="Tivey A."/>
            <person name="Walsh S.V."/>
            <person name="Warren T."/>
            <person name="Whitehead S."/>
            <person name="Woodward J.R."/>
            <person name="Volckaert G."/>
            <person name="Aert R."/>
            <person name="Robben J."/>
            <person name="Grymonprez B."/>
            <person name="Weltjens I."/>
            <person name="Vanstreels E."/>
            <person name="Rieger M."/>
            <person name="Schaefer M."/>
            <person name="Mueller-Auer S."/>
            <person name="Gabel C."/>
            <person name="Fuchs M."/>
            <person name="Duesterhoeft A."/>
            <person name="Fritzc C."/>
            <person name="Holzer E."/>
            <person name="Moestl D."/>
            <person name="Hilbert H."/>
            <person name="Borzym K."/>
            <person name="Langer I."/>
            <person name="Beck A."/>
            <person name="Lehrach H."/>
            <person name="Reinhardt R."/>
            <person name="Pohl T.M."/>
            <person name="Eger P."/>
            <person name="Zimmermann W."/>
            <person name="Wedler H."/>
            <person name="Wambutt R."/>
            <person name="Purnelle B."/>
            <person name="Goffeau A."/>
            <person name="Cadieu E."/>
            <person name="Dreano S."/>
            <person name="Gloux S."/>
            <person name="Lelaure V."/>
            <person name="Mottier S."/>
            <person name="Galibert F."/>
            <person name="Aves S.J."/>
            <person name="Xiang Z."/>
            <person name="Hunt C."/>
            <person name="Moore K."/>
            <person name="Hurst S.M."/>
            <person name="Lucas M."/>
            <person name="Rochet M."/>
            <person name="Gaillardin C."/>
            <person name="Tallada V.A."/>
            <person name="Garzon A."/>
            <person name="Thode G."/>
            <person name="Daga R.R."/>
            <person name="Cruzado L."/>
            <person name="Jimenez J."/>
            <person name="Sanchez M."/>
            <person name="del Rey F."/>
            <person name="Benito J."/>
            <person name="Dominguez A."/>
            <person name="Revuelta J.L."/>
            <person name="Moreno S."/>
            <person name="Armstrong J."/>
            <person name="Forsburg S.L."/>
            <person name="Cerutti L."/>
            <person name="Lowe T."/>
            <person name="McCombie W.R."/>
            <person name="Paulsen I."/>
            <person name="Potashkin J."/>
            <person name="Shpakovski G.V."/>
            <person name="Ussery D."/>
            <person name="Barrell B.G."/>
            <person name="Nurse P."/>
        </authorList>
    </citation>
    <scope>NUCLEOTIDE SEQUENCE [LARGE SCALE GENOMIC DNA]</scope>
    <source>
        <strain>972 / ATCC 24843</strain>
    </source>
</reference>
<reference key="3">
    <citation type="journal article" date="2007" name="Cell">
        <title>SHREC, an effector complex for heterochromatic transcriptional silencing.</title>
        <authorList>
            <person name="Sugiyama T."/>
            <person name="Cam H.P."/>
            <person name="Sugiyama R."/>
            <person name="Noma K."/>
            <person name="Zofall M."/>
            <person name="Kobayashi R."/>
            <person name="Grewal S.I.S."/>
        </authorList>
    </citation>
    <scope>FUNCTION</scope>
    <scope>INTERACTION WITH CLR3</scope>
    <scope>SUBCELLULAR LOCATION</scope>
</reference>
<dbReference type="EMBL" id="CU329670">
    <property type="protein sequence ID" value="CAB11243.1"/>
    <property type="molecule type" value="Genomic_DNA"/>
</dbReference>
<dbReference type="PIR" id="T38036">
    <property type="entry name" value="T38036"/>
</dbReference>
<dbReference type="RefSeq" id="NP_594802.1">
    <property type="nucleotide sequence ID" value="NM_001020230.2"/>
</dbReference>
<dbReference type="PDB" id="5IKJ">
    <property type="method" value="X-ray"/>
    <property type="resolution" value="2.30 A"/>
    <property type="chains" value="A=1-537"/>
</dbReference>
<dbReference type="PDBsum" id="5IKJ"/>
<dbReference type="SMR" id="O13881"/>
<dbReference type="BioGRID" id="279050">
    <property type="interactions" value="30"/>
</dbReference>
<dbReference type="ComplexPortal" id="CPX-9261">
    <property type="entry name" value="Snf2/HDAC repressor complex"/>
</dbReference>
<dbReference type="FunCoup" id="O13881">
    <property type="interactions" value="3"/>
</dbReference>
<dbReference type="STRING" id="284812.O13881"/>
<dbReference type="iPTMnet" id="O13881"/>
<dbReference type="SwissPalm" id="O13881"/>
<dbReference type="PaxDb" id="4896-SPAC1B3.17.1"/>
<dbReference type="EnsemblFungi" id="SPAC1B3.17.1">
    <property type="protein sequence ID" value="SPAC1B3.17.1:pep"/>
    <property type="gene ID" value="SPAC1B3.17"/>
</dbReference>
<dbReference type="GeneID" id="2542596"/>
<dbReference type="KEGG" id="spo:2542596"/>
<dbReference type="PomBase" id="SPAC1B3.17">
    <property type="gene designation" value="clr2"/>
</dbReference>
<dbReference type="VEuPathDB" id="FungiDB:SPAC1B3.17"/>
<dbReference type="eggNOG" id="ENOG502S16G">
    <property type="taxonomic scope" value="Eukaryota"/>
</dbReference>
<dbReference type="HOGENOM" id="CLU_560382_0_0_1"/>
<dbReference type="InParanoid" id="O13881"/>
<dbReference type="OMA" id="GRWYEPW"/>
<dbReference type="PRO" id="PR:O13881"/>
<dbReference type="Proteomes" id="UP000002485">
    <property type="component" value="Chromosome I"/>
</dbReference>
<dbReference type="GO" id="GO:0061638">
    <property type="term" value="C:CENP-A containing chromatin"/>
    <property type="evidence" value="ECO:0000314"/>
    <property type="project" value="PomBase"/>
</dbReference>
<dbReference type="GO" id="GO:0031934">
    <property type="term" value="C:mating-type region heterochromatin"/>
    <property type="evidence" value="ECO:0000314"/>
    <property type="project" value="PomBase"/>
</dbReference>
<dbReference type="GO" id="GO:0005721">
    <property type="term" value="C:pericentric heterochromatin"/>
    <property type="evidence" value="ECO:0000314"/>
    <property type="project" value="PomBase"/>
</dbReference>
<dbReference type="GO" id="GO:0033553">
    <property type="term" value="C:rDNA heterochromatin"/>
    <property type="evidence" value="ECO:0000314"/>
    <property type="project" value="PomBase"/>
</dbReference>
<dbReference type="GO" id="GO:0070824">
    <property type="term" value="C:SHREC complex"/>
    <property type="evidence" value="ECO:0000314"/>
    <property type="project" value="PomBase"/>
</dbReference>
<dbReference type="GO" id="GO:0140720">
    <property type="term" value="C:subtelomeric heterochromatin"/>
    <property type="evidence" value="ECO:0000314"/>
    <property type="project" value="PomBase"/>
</dbReference>
<dbReference type="GO" id="GO:0006325">
    <property type="term" value="P:chromatin organization"/>
    <property type="evidence" value="ECO:0000315"/>
    <property type="project" value="PomBase"/>
</dbReference>
<dbReference type="GO" id="GO:0031508">
    <property type="term" value="P:pericentric heterochromatin formation"/>
    <property type="evidence" value="ECO:0000315"/>
    <property type="project" value="PomBase"/>
</dbReference>
<dbReference type="GO" id="GO:0000183">
    <property type="term" value="P:rDNA heterochromatin formation"/>
    <property type="evidence" value="ECO:0000315"/>
    <property type="project" value="PomBase"/>
</dbReference>
<dbReference type="GO" id="GO:0030466">
    <property type="term" value="P:silent mating-type cassette heterochromatin formation"/>
    <property type="evidence" value="ECO:0000315"/>
    <property type="project" value="PomBase"/>
</dbReference>
<dbReference type="GO" id="GO:0031509">
    <property type="term" value="P:subtelomeric heterochromatin formation"/>
    <property type="evidence" value="ECO:0000315"/>
    <property type="project" value="PomBase"/>
</dbReference>
<dbReference type="InterPro" id="IPR038986">
    <property type="entry name" value="Clr2"/>
</dbReference>
<dbReference type="InterPro" id="IPR031915">
    <property type="entry name" value="Clr2_N"/>
</dbReference>
<dbReference type="InterPro" id="IPR018839">
    <property type="entry name" value="Tscrpt-silencing_Clr2_C"/>
</dbReference>
<dbReference type="PANTHER" id="PTHR38046">
    <property type="entry name" value="CRYPTIC LOCI REGULATOR 2"/>
    <property type="match status" value="1"/>
</dbReference>
<dbReference type="PANTHER" id="PTHR38046:SF1">
    <property type="entry name" value="CRYPTIC LOCI REGULATOR 2"/>
    <property type="match status" value="1"/>
</dbReference>
<dbReference type="Pfam" id="PF10383">
    <property type="entry name" value="Clr2"/>
    <property type="match status" value="1"/>
</dbReference>
<dbReference type="Pfam" id="PF16761">
    <property type="entry name" value="Clr2_transil"/>
    <property type="match status" value="1"/>
</dbReference>
<evidence type="ECO:0000256" key="1">
    <source>
        <dbReference type="SAM" id="MobiDB-lite"/>
    </source>
</evidence>
<evidence type="ECO:0000269" key="2">
    <source>
    </source>
</evidence>
<evidence type="ECO:0000269" key="3">
    <source>
    </source>
</evidence>
<evidence type="ECO:0007829" key="4">
    <source>
        <dbReference type="PDB" id="5IKJ"/>
    </source>
</evidence>
<name>CLR2_SCHPO</name>
<organism>
    <name type="scientific">Schizosaccharomyces pombe (strain 972 / ATCC 24843)</name>
    <name type="common">Fission yeast</name>
    <dbReference type="NCBI Taxonomy" id="284812"/>
    <lineage>
        <taxon>Eukaryota</taxon>
        <taxon>Fungi</taxon>
        <taxon>Dikarya</taxon>
        <taxon>Ascomycota</taxon>
        <taxon>Taphrinomycotina</taxon>
        <taxon>Schizosaccharomycetes</taxon>
        <taxon>Schizosaccharomycetales</taxon>
        <taxon>Schizosaccharomycetaceae</taxon>
        <taxon>Schizosaccharomyces</taxon>
    </lineage>
</organism>
<feature type="chain" id="PRO_0000089869" description="Cryptic loci regulator 2">
    <location>
        <begin position="1"/>
        <end position="537"/>
    </location>
</feature>
<feature type="region of interest" description="Disordered" evidence="1">
    <location>
        <begin position="96"/>
        <end position="116"/>
    </location>
</feature>
<feature type="compositionally biased region" description="Basic and acidic residues" evidence="1">
    <location>
        <begin position="107"/>
        <end position="116"/>
    </location>
</feature>
<feature type="strand" evidence="4">
    <location>
        <begin position="3"/>
        <end position="7"/>
    </location>
</feature>
<feature type="helix" evidence="4">
    <location>
        <begin position="13"/>
        <end position="15"/>
    </location>
</feature>
<feature type="strand" evidence="4">
    <location>
        <begin position="31"/>
        <end position="33"/>
    </location>
</feature>
<feature type="helix" evidence="4">
    <location>
        <begin position="39"/>
        <end position="56"/>
    </location>
</feature>
<feature type="helix" evidence="4">
    <location>
        <begin position="64"/>
        <end position="71"/>
    </location>
</feature>
<feature type="strand" evidence="4">
    <location>
        <begin position="122"/>
        <end position="124"/>
    </location>
</feature>
<feature type="helix" evidence="4">
    <location>
        <begin position="128"/>
        <end position="130"/>
    </location>
</feature>
<feature type="strand" evidence="4">
    <location>
        <begin position="132"/>
        <end position="135"/>
    </location>
</feature>
<feature type="strand" evidence="4">
    <location>
        <begin position="141"/>
        <end position="145"/>
    </location>
</feature>
<feature type="strand" evidence="4">
    <location>
        <begin position="157"/>
        <end position="161"/>
    </location>
</feature>
<feature type="helix" evidence="4">
    <location>
        <begin position="172"/>
        <end position="184"/>
    </location>
</feature>
<feature type="helix" evidence="4">
    <location>
        <begin position="190"/>
        <end position="192"/>
    </location>
</feature>
<feature type="helix" evidence="4">
    <location>
        <begin position="196"/>
        <end position="199"/>
    </location>
</feature>
<feature type="helix" evidence="4">
    <location>
        <begin position="200"/>
        <end position="202"/>
    </location>
</feature>
<feature type="helix" evidence="4">
    <location>
        <begin position="203"/>
        <end position="224"/>
    </location>
</feature>
<feature type="strand" evidence="4">
    <location>
        <begin position="236"/>
        <end position="241"/>
    </location>
</feature>
<feature type="strand" evidence="4">
    <location>
        <begin position="244"/>
        <end position="256"/>
    </location>
</feature>
<feature type="helix" evidence="4">
    <location>
        <begin position="267"/>
        <end position="274"/>
    </location>
</feature>
<feature type="strand" evidence="4">
    <location>
        <begin position="277"/>
        <end position="283"/>
    </location>
</feature>
<feature type="strand" evidence="4">
    <location>
        <begin position="289"/>
        <end position="293"/>
    </location>
</feature>
<feature type="helix" evidence="4">
    <location>
        <begin position="295"/>
        <end position="297"/>
    </location>
</feature>
<feature type="strand" evidence="4">
    <location>
        <begin position="298"/>
        <end position="300"/>
    </location>
</feature>
<feature type="helix" evidence="4">
    <location>
        <begin position="301"/>
        <end position="303"/>
    </location>
</feature>
<feature type="helix" evidence="4">
    <location>
        <begin position="311"/>
        <end position="313"/>
    </location>
</feature>
<feature type="helix" evidence="4">
    <location>
        <begin position="314"/>
        <end position="319"/>
    </location>
</feature>
<feature type="strand" evidence="4">
    <location>
        <begin position="322"/>
        <end position="329"/>
    </location>
</feature>
<feature type="helix" evidence="4">
    <location>
        <begin position="334"/>
        <end position="336"/>
    </location>
</feature>
<feature type="strand" evidence="4">
    <location>
        <begin position="337"/>
        <end position="339"/>
    </location>
</feature>
<feature type="strand" evidence="4">
    <location>
        <begin position="342"/>
        <end position="344"/>
    </location>
</feature>
<feature type="turn" evidence="4">
    <location>
        <begin position="345"/>
        <end position="347"/>
    </location>
</feature>
<feature type="strand" evidence="4">
    <location>
        <begin position="366"/>
        <end position="373"/>
    </location>
</feature>
<feature type="strand" evidence="4">
    <location>
        <begin position="376"/>
        <end position="379"/>
    </location>
</feature>
<feature type="strand" evidence="4">
    <location>
        <begin position="383"/>
        <end position="386"/>
    </location>
</feature>
<feature type="strand" evidence="4">
    <location>
        <begin position="389"/>
        <end position="391"/>
    </location>
</feature>
<feature type="helix" evidence="4">
    <location>
        <begin position="393"/>
        <end position="395"/>
    </location>
</feature>
<feature type="strand" evidence="4">
    <location>
        <begin position="400"/>
        <end position="408"/>
    </location>
</feature>
<feature type="strand" evidence="4">
    <location>
        <begin position="412"/>
        <end position="425"/>
    </location>
</feature>
<feature type="helix" evidence="4">
    <location>
        <begin position="450"/>
        <end position="458"/>
    </location>
</feature>
<feature type="strand" evidence="4">
    <location>
        <begin position="459"/>
        <end position="465"/>
    </location>
</feature>
<feature type="strand" evidence="4">
    <location>
        <begin position="471"/>
        <end position="476"/>
    </location>
</feature>
<feature type="helix" evidence="4">
    <location>
        <begin position="477"/>
        <end position="479"/>
    </location>
</feature>
<feature type="strand" evidence="4">
    <location>
        <begin position="480"/>
        <end position="483"/>
    </location>
</feature>
<feature type="helix" evidence="4">
    <location>
        <begin position="507"/>
        <end position="511"/>
    </location>
</feature>
<feature type="helix" evidence="4">
    <location>
        <begin position="513"/>
        <end position="515"/>
    </location>
</feature>
<feature type="helix" evidence="4">
    <location>
        <begin position="520"/>
        <end position="529"/>
    </location>
</feature>
<feature type="turn" evidence="4">
    <location>
        <begin position="530"/>
        <end position="532"/>
    </location>
</feature>
<accession>O13881</accession>
<keyword id="KW-0002">3D-structure</keyword>
<keyword id="KW-0137">Centromere</keyword>
<keyword id="KW-0156">Chromatin regulator</keyword>
<keyword id="KW-0158">Chromosome</keyword>
<keyword id="KW-0539">Nucleus</keyword>
<keyword id="KW-1185">Reference proteome</keyword>
<keyword id="KW-0678">Repressor</keyword>
<keyword id="KW-0779">Telomere</keyword>
<keyword id="KW-0804">Transcription</keyword>
<keyword id="KW-0805">Transcription regulation</keyword>
<proteinExistence type="evidence at protein level"/>